<protein>
    <recommendedName>
        <fullName>Putative transferase YhbX</fullName>
        <ecNumber>2.-.-.-</ecNumber>
    </recommendedName>
</protein>
<feature type="chain" id="PRO_0000209147" description="Putative transferase YhbX">
    <location>
        <begin position="1"/>
        <end position="541"/>
    </location>
</feature>
<feature type="topological domain" description="Periplasmic" evidence="2">
    <location>
        <begin position="1"/>
        <end position="60"/>
    </location>
</feature>
<feature type="transmembrane region" description="Helical" evidence="2">
    <location>
        <begin position="61"/>
        <end position="81"/>
    </location>
</feature>
<feature type="topological domain" description="Cytoplasmic" evidence="2">
    <location>
        <begin position="82"/>
        <end position="110"/>
    </location>
</feature>
<feature type="transmembrane region" description="Helical" evidence="2">
    <location>
        <begin position="111"/>
        <end position="131"/>
    </location>
</feature>
<feature type="topological domain" description="Periplasmic" evidence="2">
    <location>
        <begin position="132"/>
        <end position="141"/>
    </location>
</feature>
<feature type="transmembrane region" description="Helical" evidence="2">
    <location>
        <begin position="142"/>
        <end position="162"/>
    </location>
</feature>
<feature type="topological domain" description="Cytoplasmic" evidence="2">
    <location>
        <begin position="163"/>
        <end position="264"/>
    </location>
</feature>
<feature type="transmembrane region" description="Helical" evidence="2">
    <location>
        <begin position="265"/>
        <end position="285"/>
    </location>
</feature>
<feature type="topological domain" description="Periplasmic" evidence="2">
    <location>
        <begin position="286"/>
        <end position="541"/>
    </location>
</feature>
<comment type="function">
    <text evidence="3">There are several lipid A forms in this strain, including a phosphoethanolamine (1-O-P-pEtN) form; overexpression of this gene does not lead to higher levels of the 1-O-P-pEtN form of lipid A.</text>
</comment>
<comment type="subcellular location">
    <subcellularLocation>
        <location evidence="1">Cell inner membrane</location>
        <topology evidence="2">Multi-pass membrane protein</topology>
    </subcellularLocation>
</comment>
<comment type="similarity">
    <text evidence="4">Belongs to the phosphoethanolamine transferase family.</text>
</comment>
<comment type="sequence caution" evidence="4">
    <conflict type="erroneous initiation">
        <sequence resource="EMBL-CDS" id="AAA96312"/>
    </conflict>
    <text>Extended N-terminus.</text>
</comment>
<comment type="sequence caution" evidence="4">
    <conflict type="erroneous initiation">
        <sequence resource="EMBL-CDS" id="AAG58308"/>
    </conflict>
    <text>Extended N-terminus.</text>
</comment>
<comment type="sequence caution" evidence="4">
    <conflict type="erroneous initiation">
        <sequence resource="EMBL-CDS" id="BAB37476"/>
    </conflict>
    <text>Truncated N-terminus.</text>
</comment>
<organism>
    <name type="scientific">Escherichia coli O157:H7</name>
    <dbReference type="NCBI Taxonomy" id="83334"/>
    <lineage>
        <taxon>Bacteria</taxon>
        <taxon>Pseudomonadati</taxon>
        <taxon>Pseudomonadota</taxon>
        <taxon>Gammaproteobacteria</taxon>
        <taxon>Enterobacterales</taxon>
        <taxon>Enterobacteriaceae</taxon>
        <taxon>Escherichia</taxon>
    </lineage>
</organism>
<dbReference type="EC" id="2.-.-.-"/>
<dbReference type="EMBL" id="U50906">
    <property type="protein sequence ID" value="AAA96312.1"/>
    <property type="status" value="ALT_INIT"/>
    <property type="molecule type" value="Genomic_DNA"/>
</dbReference>
<dbReference type="EMBL" id="AE005174">
    <property type="protein sequence ID" value="AAG58308.1"/>
    <property type="status" value="ALT_INIT"/>
    <property type="molecule type" value="Genomic_DNA"/>
</dbReference>
<dbReference type="EMBL" id="BA000007">
    <property type="protein sequence ID" value="BAB37476.1"/>
    <property type="status" value="ALT_INIT"/>
    <property type="molecule type" value="Genomic_DNA"/>
</dbReference>
<dbReference type="PIR" id="E91135">
    <property type="entry name" value="E91135"/>
</dbReference>
<dbReference type="PIR" id="H85980">
    <property type="entry name" value="H85980"/>
</dbReference>
<dbReference type="RefSeq" id="NP_312080.2">
    <property type="nucleotide sequence ID" value="NC_002695.1"/>
</dbReference>
<dbReference type="RefSeq" id="WP_001310166.1">
    <property type="nucleotide sequence ID" value="NZ_VOAI01000014.1"/>
</dbReference>
<dbReference type="SMR" id="P58216"/>
<dbReference type="STRING" id="155864.Z4535"/>
<dbReference type="GeneID" id="916107"/>
<dbReference type="KEGG" id="ece:Z4535"/>
<dbReference type="KEGG" id="ecs:ECs_4053"/>
<dbReference type="PATRIC" id="fig|386585.9.peg.4232"/>
<dbReference type="eggNOG" id="COG2194">
    <property type="taxonomic scope" value="Bacteria"/>
</dbReference>
<dbReference type="HOGENOM" id="CLU_039390_4_1_6"/>
<dbReference type="Proteomes" id="UP000000558">
    <property type="component" value="Chromosome"/>
</dbReference>
<dbReference type="Proteomes" id="UP000002519">
    <property type="component" value="Chromosome"/>
</dbReference>
<dbReference type="GO" id="GO:0005886">
    <property type="term" value="C:plasma membrane"/>
    <property type="evidence" value="ECO:0007669"/>
    <property type="project" value="UniProtKB-SubCell"/>
</dbReference>
<dbReference type="GO" id="GO:0016776">
    <property type="term" value="F:phosphotransferase activity, phosphate group as acceptor"/>
    <property type="evidence" value="ECO:0007669"/>
    <property type="project" value="TreeGrafter"/>
</dbReference>
<dbReference type="GO" id="GO:0009244">
    <property type="term" value="P:lipopolysaccharide core region biosynthetic process"/>
    <property type="evidence" value="ECO:0007669"/>
    <property type="project" value="TreeGrafter"/>
</dbReference>
<dbReference type="CDD" id="cd16017">
    <property type="entry name" value="LptA"/>
    <property type="match status" value="1"/>
</dbReference>
<dbReference type="FunFam" id="3.40.720.10:FF:000069">
    <property type="entry name" value="Phosphate starvation-inducible protein PsiE"/>
    <property type="match status" value="1"/>
</dbReference>
<dbReference type="Gene3D" id="3.40.720.10">
    <property type="entry name" value="Alkaline Phosphatase, subunit A"/>
    <property type="match status" value="1"/>
</dbReference>
<dbReference type="InterPro" id="IPR017850">
    <property type="entry name" value="Alkaline_phosphatase_core_sf"/>
</dbReference>
<dbReference type="InterPro" id="IPR040423">
    <property type="entry name" value="PEA_transferase"/>
</dbReference>
<dbReference type="InterPro" id="IPR000917">
    <property type="entry name" value="Sulfatase_N"/>
</dbReference>
<dbReference type="PANTHER" id="PTHR30443">
    <property type="entry name" value="INNER MEMBRANE PROTEIN"/>
    <property type="match status" value="1"/>
</dbReference>
<dbReference type="PANTHER" id="PTHR30443:SF4">
    <property type="entry name" value="PHOSPHOETHANOLAMINE TRANSFERASE OPGE-RELATED"/>
    <property type="match status" value="1"/>
</dbReference>
<dbReference type="Pfam" id="PF00884">
    <property type="entry name" value="Sulfatase"/>
    <property type="match status" value="1"/>
</dbReference>
<dbReference type="SUPFAM" id="SSF53649">
    <property type="entry name" value="Alkaline phosphatase-like"/>
    <property type="match status" value="1"/>
</dbReference>
<proteinExistence type="inferred from homology"/>
<name>YHBX_ECO57</name>
<accession>P58216</accession>
<keyword id="KW-0997">Cell inner membrane</keyword>
<keyword id="KW-1003">Cell membrane</keyword>
<keyword id="KW-0472">Membrane</keyword>
<keyword id="KW-1185">Reference proteome</keyword>
<keyword id="KW-0808">Transferase</keyword>
<keyword id="KW-0812">Transmembrane</keyword>
<keyword id="KW-1133">Transmembrane helix</keyword>
<sequence length="541" mass="60639">MTVFNKFARSFKSHWLLYLSVIVFGITNLVASSGAHMVQRLLFFVLTILVVKRISSLPLRLLVAAPFVLLTAADMSISLYSWCTFGTTFNDGFAISVLQSDPDEVAKMLGMYSPYLCAFAFLSLLFLAVIIKYDVSLPTKKVTGILLLIVISGSLFSACQFAYKDAKNKNAFSPYILASRFATYTPFFNLNYFALAAKEHQRLLSIANTVPYFQLSVRDTGIDTYVLIVGESVRVDNMSLYGYTRSTTPQVEAQRKQIKLFNQAISGAPYTALSVPLSLTADSVLSHDIHNYPDNIINMANQAGFQTFWLSSQSAFRQNGTAVTSIAMRAMETVYVRGFDELLLPHLSQALQQNTQQKKLIVLHLNGSHEPACSAYPQSSAVFQPQDDQDACYDNSIHYTDSLLGQVFELLKDRRASVMYFADHGLERDPTKKNVYFHGGREASQQAYHVPMFIWYSPVLGDGVDRTTENNIFSTAYNNYLINAWMGVTKPEQPQTLEEVIVHYKGDSLVVDANHDVFDYVMLRKEFTEDKQGNPTPEGQG</sequence>
<evidence type="ECO:0000250" key="1">
    <source>
        <dbReference type="UniProtKB" id="P42640"/>
    </source>
</evidence>
<evidence type="ECO:0000255" key="2"/>
<evidence type="ECO:0000269" key="3">
    <source>
    </source>
</evidence>
<evidence type="ECO:0000305" key="4"/>
<reference key="1">
    <citation type="submission" date="1996-03" db="EMBL/GenBank/DDBJ databases">
        <title>Cloning and sequencing a gene associated with an outer membrane protein of Escherichia coli O157:H7.</title>
        <authorList>
            <person name="Zhao S."/>
            <person name="Mitchell S.E."/>
            <person name="Meng J."/>
            <person name="Doyle M.P."/>
            <person name="Kresovich S."/>
        </authorList>
    </citation>
    <scope>NUCLEOTIDE SEQUENCE [GENOMIC DNA]</scope>
    <source>
        <strain>O157:H7 / EHEC</strain>
    </source>
</reference>
<reference key="2">
    <citation type="journal article" date="2001" name="Nature">
        <title>Genome sequence of enterohaemorrhagic Escherichia coli O157:H7.</title>
        <authorList>
            <person name="Perna N.T."/>
            <person name="Plunkett G. III"/>
            <person name="Burland V."/>
            <person name="Mau B."/>
            <person name="Glasner J.D."/>
            <person name="Rose D.J."/>
            <person name="Mayhew G.F."/>
            <person name="Evans P.S."/>
            <person name="Gregor J."/>
            <person name="Kirkpatrick H.A."/>
            <person name="Posfai G."/>
            <person name="Hackett J."/>
            <person name="Klink S."/>
            <person name="Boutin A."/>
            <person name="Shao Y."/>
            <person name="Miller L."/>
            <person name="Grotbeck E.J."/>
            <person name="Davis N.W."/>
            <person name="Lim A."/>
            <person name="Dimalanta E.T."/>
            <person name="Potamousis K."/>
            <person name="Apodaca J."/>
            <person name="Anantharaman T.S."/>
            <person name="Lin J."/>
            <person name="Yen G."/>
            <person name="Schwartz D.C."/>
            <person name="Welch R.A."/>
            <person name="Blattner F.R."/>
        </authorList>
    </citation>
    <scope>NUCLEOTIDE SEQUENCE [LARGE SCALE GENOMIC DNA]</scope>
    <source>
        <strain>O157:H7 / EDL933 / ATCC 700927 / EHEC</strain>
    </source>
</reference>
<reference key="3">
    <citation type="journal article" date="2001" name="DNA Res.">
        <title>Complete genome sequence of enterohemorrhagic Escherichia coli O157:H7 and genomic comparison with a laboratory strain K-12.</title>
        <authorList>
            <person name="Hayashi T."/>
            <person name="Makino K."/>
            <person name="Ohnishi M."/>
            <person name="Kurokawa K."/>
            <person name="Ishii K."/>
            <person name="Yokoyama K."/>
            <person name="Han C.-G."/>
            <person name="Ohtsubo E."/>
            <person name="Nakayama K."/>
            <person name="Murata T."/>
            <person name="Tanaka M."/>
            <person name="Tobe T."/>
            <person name="Iida T."/>
            <person name="Takami H."/>
            <person name="Honda T."/>
            <person name="Sasakawa C."/>
            <person name="Ogasawara N."/>
            <person name="Yasunaga T."/>
            <person name="Kuhara S."/>
            <person name="Shiba T."/>
            <person name="Hattori M."/>
            <person name="Shinagawa H."/>
        </authorList>
    </citation>
    <scope>NUCLEOTIDE SEQUENCE [LARGE SCALE GENOMIC DNA]</scope>
    <source>
        <strain>O157:H7 / Sakai / RIMD 0509952 / EHEC</strain>
    </source>
</reference>
<reference key="4">
    <citation type="journal article" date="2006" name="Microbiology">
        <title>Phosphoethanolamine substitution in the lipid A of Escherichia coli O157:H7 and its association with PmrC.</title>
        <authorList>
            <person name="Kim S.H."/>
            <person name="Jia W."/>
            <person name="Parreira V.R."/>
            <person name="Bishop R.E."/>
            <person name="Gyles C.L."/>
        </authorList>
    </citation>
    <scope>OVEREXPRESSION</scope>
</reference>
<gene>
    <name type="primary">yhbX</name>
    <name type="ordered locus">Z4535</name>
    <name type="ordered locus">ECs4053</name>
</gene>